<reference key="1">
    <citation type="submission" date="2007-11" db="EMBL/GenBank/DDBJ databases">
        <authorList>
            <consortium name="The Salmonella enterica serovar Arizonae Genome Sequencing Project"/>
            <person name="McClelland M."/>
            <person name="Sanderson E.K."/>
            <person name="Porwollik S."/>
            <person name="Spieth J."/>
            <person name="Clifton W.S."/>
            <person name="Fulton R."/>
            <person name="Chunyan W."/>
            <person name="Wollam A."/>
            <person name="Shah N."/>
            <person name="Pepin K."/>
            <person name="Bhonagiri V."/>
            <person name="Nash W."/>
            <person name="Johnson M."/>
            <person name="Thiruvilangam P."/>
            <person name="Wilson R."/>
        </authorList>
    </citation>
    <scope>NUCLEOTIDE SEQUENCE [LARGE SCALE GENOMIC DNA]</scope>
    <source>
        <strain>ATCC BAA-731 / CDC346-86 / RSK2980</strain>
    </source>
</reference>
<sequence>MIDKSAFIHPTAIVEDGAVLGANVHIGPFCIVGPQVEIGEGTVLKSHVVVNGQTKIGRDNEIYQFASIGEVNQDLKYAGEPTRVEIGDRNRIRESVTIHRGTVQGGGLTKVGSDNLLMINAHVAHDCTVGNRCILANNATLAGHVSIDDFAIIGGMTAVHQFCIIGAHVMVGGCSGVAQDVPPYVIAQGNHATPFGVNIEGLKRRGFSREGIVAIRNAYKLLYRSGKTLDDAKLEIAELAEKHPEVKAFTEFFERSTRGPIR</sequence>
<comment type="function">
    <text evidence="1">Involved in the biosynthesis of lipid A, a phosphorylated glycolipid that anchors the lipopolysaccharide to the outer membrane of the cell.</text>
</comment>
<comment type="catalytic activity">
    <reaction evidence="1">
        <text>a (3R)-hydroxyacyl-[ACP] + UDP-N-acetyl-alpha-D-glucosamine = a UDP-3-O-[(3R)-3-hydroxyacyl]-N-acetyl-alpha-D-glucosamine + holo-[ACP]</text>
        <dbReference type="Rhea" id="RHEA:67812"/>
        <dbReference type="Rhea" id="RHEA-COMP:9685"/>
        <dbReference type="Rhea" id="RHEA-COMP:9945"/>
        <dbReference type="ChEBI" id="CHEBI:57705"/>
        <dbReference type="ChEBI" id="CHEBI:64479"/>
        <dbReference type="ChEBI" id="CHEBI:78827"/>
        <dbReference type="ChEBI" id="CHEBI:173225"/>
        <dbReference type="EC" id="2.3.1.129"/>
    </reaction>
</comment>
<comment type="pathway">
    <text evidence="1">Glycolipid biosynthesis; lipid IV(A) biosynthesis; lipid IV(A) from (3R)-3-hydroxytetradecanoyl-[acyl-carrier-protein] and UDP-N-acetyl-alpha-D-glucosamine: step 1/6.</text>
</comment>
<comment type="subunit">
    <text evidence="1">Homotrimer.</text>
</comment>
<comment type="subcellular location">
    <subcellularLocation>
        <location evidence="1">Cytoplasm</location>
    </subcellularLocation>
</comment>
<comment type="similarity">
    <text evidence="1">Belongs to the transferase hexapeptide repeat family. LpxA subfamily.</text>
</comment>
<organism>
    <name type="scientific">Salmonella arizonae (strain ATCC BAA-731 / CDC346-86 / RSK2980)</name>
    <dbReference type="NCBI Taxonomy" id="41514"/>
    <lineage>
        <taxon>Bacteria</taxon>
        <taxon>Pseudomonadati</taxon>
        <taxon>Pseudomonadota</taxon>
        <taxon>Gammaproteobacteria</taxon>
        <taxon>Enterobacterales</taxon>
        <taxon>Enterobacteriaceae</taxon>
        <taxon>Salmonella</taxon>
    </lineage>
</organism>
<evidence type="ECO:0000255" key="1">
    <source>
        <dbReference type="HAMAP-Rule" id="MF_00387"/>
    </source>
</evidence>
<gene>
    <name evidence="1" type="primary">lpxA</name>
    <name type="ordered locus">SARI_02774</name>
</gene>
<protein>
    <recommendedName>
        <fullName evidence="1">Acyl-[acyl-carrier-protein]--UDP-N-acetylglucosamine O-acyltransferase</fullName>
        <shortName evidence="1">UDP-N-acetylglucosamine acyltransferase</shortName>
        <ecNumber evidence="1">2.3.1.129</ecNumber>
    </recommendedName>
</protein>
<proteinExistence type="inferred from homology"/>
<dbReference type="EC" id="2.3.1.129" evidence="1"/>
<dbReference type="EMBL" id="CP000880">
    <property type="protein sequence ID" value="ABX22623.1"/>
    <property type="molecule type" value="Genomic_DNA"/>
</dbReference>
<dbReference type="SMR" id="A9MPI0"/>
<dbReference type="STRING" id="41514.SARI_02774"/>
<dbReference type="KEGG" id="ses:SARI_02774"/>
<dbReference type="HOGENOM" id="CLU_061249_0_0_6"/>
<dbReference type="UniPathway" id="UPA00359">
    <property type="reaction ID" value="UER00477"/>
</dbReference>
<dbReference type="Proteomes" id="UP000002084">
    <property type="component" value="Chromosome"/>
</dbReference>
<dbReference type="GO" id="GO:0005737">
    <property type="term" value="C:cytoplasm"/>
    <property type="evidence" value="ECO:0007669"/>
    <property type="project" value="UniProtKB-SubCell"/>
</dbReference>
<dbReference type="GO" id="GO:0016020">
    <property type="term" value="C:membrane"/>
    <property type="evidence" value="ECO:0007669"/>
    <property type="project" value="GOC"/>
</dbReference>
<dbReference type="GO" id="GO:0008780">
    <property type="term" value="F:acyl-[acyl-carrier-protein]-UDP-N-acetylglucosamine O-acyltransferase activity"/>
    <property type="evidence" value="ECO:0007669"/>
    <property type="project" value="UniProtKB-UniRule"/>
</dbReference>
<dbReference type="GO" id="GO:0009245">
    <property type="term" value="P:lipid A biosynthetic process"/>
    <property type="evidence" value="ECO:0007669"/>
    <property type="project" value="UniProtKB-UniRule"/>
</dbReference>
<dbReference type="CDD" id="cd03351">
    <property type="entry name" value="LbH_UDP-GlcNAc_AT"/>
    <property type="match status" value="1"/>
</dbReference>
<dbReference type="FunFam" id="2.160.10.10:FF:000003">
    <property type="entry name" value="Acyl-[acyl-carrier-protein]--UDP-N-acetylglucosamine O-acyltransferase"/>
    <property type="match status" value="1"/>
</dbReference>
<dbReference type="Gene3D" id="2.160.10.10">
    <property type="entry name" value="Hexapeptide repeat proteins"/>
    <property type="match status" value="1"/>
</dbReference>
<dbReference type="Gene3D" id="1.20.1180.10">
    <property type="entry name" value="Udp N-acetylglucosamine O-acyltransferase, C-terminal domain"/>
    <property type="match status" value="1"/>
</dbReference>
<dbReference type="HAMAP" id="MF_00387">
    <property type="entry name" value="LpxA"/>
    <property type="match status" value="1"/>
</dbReference>
<dbReference type="InterPro" id="IPR029098">
    <property type="entry name" value="Acetyltransf_C"/>
</dbReference>
<dbReference type="InterPro" id="IPR037157">
    <property type="entry name" value="Acetyltransf_C_sf"/>
</dbReference>
<dbReference type="InterPro" id="IPR001451">
    <property type="entry name" value="Hexapep"/>
</dbReference>
<dbReference type="InterPro" id="IPR018357">
    <property type="entry name" value="Hexapep_transf_CS"/>
</dbReference>
<dbReference type="InterPro" id="IPR010137">
    <property type="entry name" value="Lipid_A_LpxA"/>
</dbReference>
<dbReference type="InterPro" id="IPR011004">
    <property type="entry name" value="Trimer_LpxA-like_sf"/>
</dbReference>
<dbReference type="NCBIfam" id="TIGR01852">
    <property type="entry name" value="lipid_A_lpxA"/>
    <property type="match status" value="1"/>
</dbReference>
<dbReference type="NCBIfam" id="NF003657">
    <property type="entry name" value="PRK05289.1"/>
    <property type="match status" value="1"/>
</dbReference>
<dbReference type="PANTHER" id="PTHR43480">
    <property type="entry name" value="ACYL-[ACYL-CARRIER-PROTEIN]--UDP-N-ACETYLGLUCOSAMINE O-ACYLTRANSFERASE"/>
    <property type="match status" value="1"/>
</dbReference>
<dbReference type="PANTHER" id="PTHR43480:SF1">
    <property type="entry name" value="ACYL-[ACYL-CARRIER-PROTEIN]--UDP-N-ACETYLGLUCOSAMINE O-ACYLTRANSFERASE, MITOCHONDRIAL-RELATED"/>
    <property type="match status" value="1"/>
</dbReference>
<dbReference type="Pfam" id="PF13720">
    <property type="entry name" value="Acetyltransf_11"/>
    <property type="match status" value="1"/>
</dbReference>
<dbReference type="Pfam" id="PF00132">
    <property type="entry name" value="Hexapep"/>
    <property type="match status" value="2"/>
</dbReference>
<dbReference type="PIRSF" id="PIRSF000456">
    <property type="entry name" value="UDP-GlcNAc_acltr"/>
    <property type="match status" value="1"/>
</dbReference>
<dbReference type="SUPFAM" id="SSF51161">
    <property type="entry name" value="Trimeric LpxA-like enzymes"/>
    <property type="match status" value="1"/>
</dbReference>
<dbReference type="PROSITE" id="PS00101">
    <property type="entry name" value="HEXAPEP_TRANSFERASES"/>
    <property type="match status" value="2"/>
</dbReference>
<name>LPXA_SALAR</name>
<feature type="chain" id="PRO_1000080213" description="Acyl-[acyl-carrier-protein]--UDP-N-acetylglucosamine O-acyltransferase">
    <location>
        <begin position="1"/>
        <end position="262"/>
    </location>
</feature>
<keyword id="KW-0012">Acyltransferase</keyword>
<keyword id="KW-0963">Cytoplasm</keyword>
<keyword id="KW-0441">Lipid A biosynthesis</keyword>
<keyword id="KW-0444">Lipid biosynthesis</keyword>
<keyword id="KW-0443">Lipid metabolism</keyword>
<keyword id="KW-1185">Reference proteome</keyword>
<keyword id="KW-0677">Repeat</keyword>
<keyword id="KW-0808">Transferase</keyword>
<accession>A9MPI0</accession>